<name>DBH_STAAM</name>
<protein>
    <recommendedName>
        <fullName>DNA-binding protein HU</fullName>
    </recommendedName>
</protein>
<sequence>MNKTDLINAVAEQADLTKKEAGSAVDAVFESIQNSLAKGEKVQLIGFGNFEVRERAARKGRNPQTGKEIDIPASKVPAFKAGKALKDAVK</sequence>
<keyword id="KW-0002">3D-structure</keyword>
<keyword id="KW-0226">DNA condensation</keyword>
<keyword id="KW-0238">DNA-binding</keyword>
<feature type="chain" id="PRO_0000223376" description="DNA-binding protein HU">
    <location>
        <begin position="1"/>
        <end position="90"/>
    </location>
</feature>
<feature type="helix" evidence="3">
    <location>
        <begin position="3"/>
        <end position="13"/>
    </location>
</feature>
<feature type="helix" evidence="3">
    <location>
        <begin position="18"/>
        <end position="37"/>
    </location>
</feature>
<feature type="strand" evidence="3">
    <location>
        <begin position="42"/>
        <end position="44"/>
    </location>
</feature>
<feature type="turn" evidence="3">
    <location>
        <begin position="45"/>
        <end position="47"/>
    </location>
</feature>
<feature type="strand" evidence="3">
    <location>
        <begin position="48"/>
        <end position="55"/>
    </location>
</feature>
<feature type="strand" evidence="3">
    <location>
        <begin position="58"/>
        <end position="61"/>
    </location>
</feature>
<feature type="turn" evidence="3">
    <location>
        <begin position="63"/>
        <end position="65"/>
    </location>
</feature>
<feature type="strand" evidence="3">
    <location>
        <begin position="68"/>
        <end position="71"/>
    </location>
</feature>
<feature type="strand" evidence="3">
    <location>
        <begin position="74"/>
        <end position="81"/>
    </location>
</feature>
<feature type="helix" evidence="3">
    <location>
        <begin position="83"/>
        <end position="89"/>
    </location>
</feature>
<dbReference type="EMBL" id="BA000017">
    <property type="protein sequence ID" value="BAB57635.1"/>
    <property type="molecule type" value="Genomic_DNA"/>
</dbReference>
<dbReference type="RefSeq" id="WP_001043863.1">
    <property type="nucleotide sequence ID" value="NC_002758.2"/>
</dbReference>
<dbReference type="PDB" id="4QJN">
    <property type="method" value="X-ray"/>
    <property type="resolution" value="2.61 A"/>
    <property type="chains" value="A/B/C/D=1-90"/>
</dbReference>
<dbReference type="PDB" id="4QJU">
    <property type="method" value="X-ray"/>
    <property type="resolution" value="2.16 A"/>
    <property type="chains" value="A/B=1-90"/>
</dbReference>
<dbReference type="PDB" id="8HD5">
    <property type="method" value="X-ray"/>
    <property type="resolution" value="2.14 A"/>
    <property type="chains" value="A/B/C/D=1-90"/>
</dbReference>
<dbReference type="PDBsum" id="4QJN"/>
<dbReference type="PDBsum" id="4QJU"/>
<dbReference type="PDBsum" id="8HD5"/>
<dbReference type="SMR" id="Q99U17"/>
<dbReference type="KEGG" id="sav:SAV1473"/>
<dbReference type="HOGENOM" id="CLU_105066_3_2_9"/>
<dbReference type="PhylomeDB" id="Q99U17"/>
<dbReference type="EvolutionaryTrace" id="Q99U17"/>
<dbReference type="Proteomes" id="UP000002481">
    <property type="component" value="Chromosome"/>
</dbReference>
<dbReference type="GO" id="GO:0005829">
    <property type="term" value="C:cytosol"/>
    <property type="evidence" value="ECO:0007669"/>
    <property type="project" value="TreeGrafter"/>
</dbReference>
<dbReference type="GO" id="GO:0003677">
    <property type="term" value="F:DNA binding"/>
    <property type="evidence" value="ECO:0007669"/>
    <property type="project" value="UniProtKB-KW"/>
</dbReference>
<dbReference type="GO" id="GO:0030527">
    <property type="term" value="F:structural constituent of chromatin"/>
    <property type="evidence" value="ECO:0007669"/>
    <property type="project" value="InterPro"/>
</dbReference>
<dbReference type="GO" id="GO:0030261">
    <property type="term" value="P:chromosome condensation"/>
    <property type="evidence" value="ECO:0007669"/>
    <property type="project" value="UniProtKB-KW"/>
</dbReference>
<dbReference type="CDD" id="cd13831">
    <property type="entry name" value="HU"/>
    <property type="match status" value="1"/>
</dbReference>
<dbReference type="FunFam" id="4.10.520.10:FF:000001">
    <property type="entry name" value="DNA-binding protein HU"/>
    <property type="match status" value="1"/>
</dbReference>
<dbReference type="Gene3D" id="4.10.520.10">
    <property type="entry name" value="IHF-like DNA-binding proteins"/>
    <property type="match status" value="1"/>
</dbReference>
<dbReference type="InterPro" id="IPR000119">
    <property type="entry name" value="Hist_DNA-bd"/>
</dbReference>
<dbReference type="InterPro" id="IPR020816">
    <property type="entry name" value="Histone-like_DNA-bd_CS"/>
</dbReference>
<dbReference type="InterPro" id="IPR010992">
    <property type="entry name" value="IHF-like_DNA-bd_dom_sf"/>
</dbReference>
<dbReference type="PANTHER" id="PTHR33175">
    <property type="entry name" value="DNA-BINDING PROTEIN HU"/>
    <property type="match status" value="1"/>
</dbReference>
<dbReference type="PANTHER" id="PTHR33175:SF3">
    <property type="entry name" value="DNA-BINDING PROTEIN HU-BETA"/>
    <property type="match status" value="1"/>
</dbReference>
<dbReference type="Pfam" id="PF00216">
    <property type="entry name" value="Bac_DNA_binding"/>
    <property type="match status" value="1"/>
</dbReference>
<dbReference type="PRINTS" id="PR01727">
    <property type="entry name" value="DNABINDINGHU"/>
</dbReference>
<dbReference type="SMART" id="SM00411">
    <property type="entry name" value="BHL"/>
    <property type="match status" value="1"/>
</dbReference>
<dbReference type="SUPFAM" id="SSF47729">
    <property type="entry name" value="IHF-like DNA-binding proteins"/>
    <property type="match status" value="1"/>
</dbReference>
<dbReference type="PROSITE" id="PS00045">
    <property type="entry name" value="HISTONE_LIKE"/>
    <property type="match status" value="1"/>
</dbReference>
<organism>
    <name type="scientific">Staphylococcus aureus (strain Mu50 / ATCC 700699)</name>
    <dbReference type="NCBI Taxonomy" id="158878"/>
    <lineage>
        <taxon>Bacteria</taxon>
        <taxon>Bacillati</taxon>
        <taxon>Bacillota</taxon>
        <taxon>Bacilli</taxon>
        <taxon>Bacillales</taxon>
        <taxon>Staphylococcaceae</taxon>
        <taxon>Staphylococcus</taxon>
    </lineage>
</organism>
<reference key="1">
    <citation type="journal article" date="2001" name="Lancet">
        <title>Whole genome sequencing of meticillin-resistant Staphylococcus aureus.</title>
        <authorList>
            <person name="Kuroda M."/>
            <person name="Ohta T."/>
            <person name="Uchiyama I."/>
            <person name="Baba T."/>
            <person name="Yuzawa H."/>
            <person name="Kobayashi I."/>
            <person name="Cui L."/>
            <person name="Oguchi A."/>
            <person name="Aoki K."/>
            <person name="Nagai Y."/>
            <person name="Lian J.-Q."/>
            <person name="Ito T."/>
            <person name="Kanamori M."/>
            <person name="Matsumaru H."/>
            <person name="Maruyama A."/>
            <person name="Murakami H."/>
            <person name="Hosoyama A."/>
            <person name="Mizutani-Ui Y."/>
            <person name="Takahashi N.K."/>
            <person name="Sawano T."/>
            <person name="Inoue R."/>
            <person name="Kaito C."/>
            <person name="Sekimizu K."/>
            <person name="Hirakawa H."/>
            <person name="Kuhara S."/>
            <person name="Goto S."/>
            <person name="Yabuzaki J."/>
            <person name="Kanehisa M."/>
            <person name="Yamashita A."/>
            <person name="Oshima K."/>
            <person name="Furuya K."/>
            <person name="Yoshino C."/>
            <person name="Shiba T."/>
            <person name="Hattori M."/>
            <person name="Ogasawara N."/>
            <person name="Hayashi H."/>
            <person name="Hiramatsu K."/>
        </authorList>
    </citation>
    <scope>NUCLEOTIDE SEQUENCE [LARGE SCALE GENOMIC DNA]</scope>
    <source>
        <strain>Mu50 / ATCC 700699</strain>
    </source>
</reference>
<evidence type="ECO:0000250" key="1"/>
<evidence type="ECO:0000305" key="2"/>
<evidence type="ECO:0007829" key="3">
    <source>
        <dbReference type="PDB" id="4QJU"/>
    </source>
</evidence>
<accession>Q99U17</accession>
<gene>
    <name type="primary">hup</name>
    <name type="ordered locus">SAV1473</name>
</gene>
<comment type="function">
    <text evidence="1">Histone-like DNA-binding protein which is capable of wrapping DNA to stabilize it, and thus to prevent its denaturation under extreme environmental conditions.</text>
</comment>
<comment type="subunit">
    <text evidence="1">Homodimer.</text>
</comment>
<comment type="similarity">
    <text evidence="2">Belongs to the bacterial histone-like protein family.</text>
</comment>
<proteinExistence type="evidence at protein level"/>